<proteinExistence type="inferred from homology"/>
<protein>
    <recommendedName>
        <fullName evidence="1">Glucose-1-phosphate adenylyltransferase</fullName>
        <ecNumber evidence="1">2.7.7.27</ecNumber>
    </recommendedName>
    <alternativeName>
        <fullName evidence="1">ADP-glucose pyrophosphorylase</fullName>
        <shortName evidence="1">ADPGlc PPase</shortName>
    </alternativeName>
    <alternativeName>
        <fullName evidence="1">ADP-glucose synthase</fullName>
    </alternativeName>
</protein>
<comment type="function">
    <text evidence="1">Involved in the biosynthesis of ADP-glucose, a building block required for the elongation reactions to produce glycogen. Catalyzes the reaction between ATP and alpha-D-glucose 1-phosphate (G1P) to produce pyrophosphate and ADP-Glc.</text>
</comment>
<comment type="catalytic activity">
    <reaction evidence="1">
        <text>alpha-D-glucose 1-phosphate + ATP + H(+) = ADP-alpha-D-glucose + diphosphate</text>
        <dbReference type="Rhea" id="RHEA:12120"/>
        <dbReference type="ChEBI" id="CHEBI:15378"/>
        <dbReference type="ChEBI" id="CHEBI:30616"/>
        <dbReference type="ChEBI" id="CHEBI:33019"/>
        <dbReference type="ChEBI" id="CHEBI:57498"/>
        <dbReference type="ChEBI" id="CHEBI:58601"/>
        <dbReference type="EC" id="2.7.7.27"/>
    </reaction>
</comment>
<comment type="pathway">
    <text evidence="1">Glycan biosynthesis; glycogen biosynthesis.</text>
</comment>
<comment type="subunit">
    <text evidence="1">Homotetramer.</text>
</comment>
<comment type="similarity">
    <text evidence="1">Belongs to the bacterial/plant glucose-1-phosphate adenylyltransferase family.</text>
</comment>
<dbReference type="EC" id="2.7.7.27" evidence="1"/>
<dbReference type="EMBL" id="CP001052">
    <property type="protein sequence ID" value="ACD15956.1"/>
    <property type="molecule type" value="Genomic_DNA"/>
</dbReference>
<dbReference type="RefSeq" id="WP_012432570.1">
    <property type="nucleotide sequence ID" value="NC_010681.1"/>
</dbReference>
<dbReference type="SMR" id="B2T2Z5"/>
<dbReference type="STRING" id="398527.Bphyt_1543"/>
<dbReference type="KEGG" id="bpy:Bphyt_1543"/>
<dbReference type="eggNOG" id="COG0448">
    <property type="taxonomic scope" value="Bacteria"/>
</dbReference>
<dbReference type="HOGENOM" id="CLU_029499_14_1_4"/>
<dbReference type="OrthoDB" id="9801810at2"/>
<dbReference type="UniPathway" id="UPA00164"/>
<dbReference type="Proteomes" id="UP000001739">
    <property type="component" value="Chromosome 1"/>
</dbReference>
<dbReference type="GO" id="GO:0005524">
    <property type="term" value="F:ATP binding"/>
    <property type="evidence" value="ECO:0007669"/>
    <property type="project" value="UniProtKB-KW"/>
</dbReference>
<dbReference type="GO" id="GO:0008878">
    <property type="term" value="F:glucose-1-phosphate adenylyltransferase activity"/>
    <property type="evidence" value="ECO:0007669"/>
    <property type="project" value="UniProtKB-UniRule"/>
</dbReference>
<dbReference type="GO" id="GO:0005978">
    <property type="term" value="P:glycogen biosynthetic process"/>
    <property type="evidence" value="ECO:0007669"/>
    <property type="project" value="UniProtKB-UniRule"/>
</dbReference>
<dbReference type="CDD" id="cd02508">
    <property type="entry name" value="ADP_Glucose_PP"/>
    <property type="match status" value="1"/>
</dbReference>
<dbReference type="CDD" id="cd04651">
    <property type="entry name" value="LbH_G1P_AT_C"/>
    <property type="match status" value="1"/>
</dbReference>
<dbReference type="FunFam" id="3.90.550.10:FF:000014">
    <property type="entry name" value="Glucose-1-phosphate adenylyltransferase"/>
    <property type="match status" value="1"/>
</dbReference>
<dbReference type="Gene3D" id="2.160.10.10">
    <property type="entry name" value="Hexapeptide repeat proteins"/>
    <property type="match status" value="1"/>
</dbReference>
<dbReference type="Gene3D" id="3.90.550.10">
    <property type="entry name" value="Spore Coat Polysaccharide Biosynthesis Protein SpsA, Chain A"/>
    <property type="match status" value="1"/>
</dbReference>
<dbReference type="HAMAP" id="MF_00624">
    <property type="entry name" value="GlgC"/>
    <property type="match status" value="1"/>
</dbReference>
<dbReference type="InterPro" id="IPR011831">
    <property type="entry name" value="ADP-Glc_PPase"/>
</dbReference>
<dbReference type="InterPro" id="IPR005836">
    <property type="entry name" value="ADP_Glu_pyroP_CS"/>
</dbReference>
<dbReference type="InterPro" id="IPR023049">
    <property type="entry name" value="GlgC_bac"/>
</dbReference>
<dbReference type="InterPro" id="IPR056818">
    <property type="entry name" value="GlmU/GlgC-like_hexapep"/>
</dbReference>
<dbReference type="InterPro" id="IPR005835">
    <property type="entry name" value="NTP_transferase_dom"/>
</dbReference>
<dbReference type="InterPro" id="IPR029044">
    <property type="entry name" value="Nucleotide-diphossugar_trans"/>
</dbReference>
<dbReference type="InterPro" id="IPR011004">
    <property type="entry name" value="Trimer_LpxA-like_sf"/>
</dbReference>
<dbReference type="NCBIfam" id="TIGR02091">
    <property type="entry name" value="glgC"/>
    <property type="match status" value="1"/>
</dbReference>
<dbReference type="NCBIfam" id="NF001947">
    <property type="entry name" value="PRK00725.1"/>
    <property type="match status" value="1"/>
</dbReference>
<dbReference type="NCBIfam" id="NF002023">
    <property type="entry name" value="PRK00844.1"/>
    <property type="match status" value="1"/>
</dbReference>
<dbReference type="PANTHER" id="PTHR43523:SF2">
    <property type="entry name" value="GLUCOSE-1-PHOSPHATE ADENYLYLTRANSFERASE"/>
    <property type="match status" value="1"/>
</dbReference>
<dbReference type="PANTHER" id="PTHR43523">
    <property type="entry name" value="GLUCOSE-1-PHOSPHATE ADENYLYLTRANSFERASE-RELATED"/>
    <property type="match status" value="1"/>
</dbReference>
<dbReference type="Pfam" id="PF24894">
    <property type="entry name" value="Hexapep_GlmU"/>
    <property type="match status" value="1"/>
</dbReference>
<dbReference type="Pfam" id="PF00483">
    <property type="entry name" value="NTP_transferase"/>
    <property type="match status" value="1"/>
</dbReference>
<dbReference type="SUPFAM" id="SSF53448">
    <property type="entry name" value="Nucleotide-diphospho-sugar transferases"/>
    <property type="match status" value="1"/>
</dbReference>
<dbReference type="SUPFAM" id="SSF51161">
    <property type="entry name" value="Trimeric LpxA-like enzymes"/>
    <property type="match status" value="1"/>
</dbReference>
<dbReference type="PROSITE" id="PS00809">
    <property type="entry name" value="ADP_GLC_PYROPHOSPH_2"/>
    <property type="match status" value="1"/>
</dbReference>
<dbReference type="PROSITE" id="PS00810">
    <property type="entry name" value="ADP_GLC_PYROPHOSPH_3"/>
    <property type="match status" value="1"/>
</dbReference>
<sequence>MDTPARLNDLQRTTLAIVLAGGRGTRLGPLTNKRVKPAVHFGGKYRIIDFALSNCLNSGIRRIAVVTQYKAHSLLRHLQRGWSFLRGEMGEFIDLWPAQQRVEGAHWYRGTADAVFQNLDIIRSIRPKYVVVLAGDHIYKMDYTRMIADHAESGADCTVGCIEVPRMEAVAFGVMHVDANRRVTDFLEKPADPPCIPGRPDTALASMGIYVFSADYLYSLLEENISTIDTDHDFGKDILPRVVTQGTAIAHPFSMSCVSSDPNVEPYWRDVGTIDAYWAANLDLASTIPTLDLYDRNWPIWTYQEQLPPAKFVRDMKGLQGSGNNLIVCGGCVISGSQISRSVLSSNVKVSSFCNINEAVLLPQVTVGASCRLQKVVIDRGCAIPEGTVIGEDPVSDAERFYRTDDGVVLVTPEALRQKV</sequence>
<reference key="1">
    <citation type="journal article" date="2011" name="J. Bacteriol.">
        <title>Complete genome sequence of the plant growth-promoting endophyte Burkholderia phytofirmans strain PsJN.</title>
        <authorList>
            <person name="Weilharter A."/>
            <person name="Mitter B."/>
            <person name="Shin M.V."/>
            <person name="Chain P.S."/>
            <person name="Nowak J."/>
            <person name="Sessitsch A."/>
        </authorList>
    </citation>
    <scope>NUCLEOTIDE SEQUENCE [LARGE SCALE GENOMIC DNA]</scope>
    <source>
        <strain>DSM 17436 / LMG 22146 / PsJN</strain>
    </source>
</reference>
<feature type="chain" id="PRO_1000130469" description="Glucose-1-phosphate adenylyltransferase">
    <location>
        <begin position="1"/>
        <end position="420"/>
    </location>
</feature>
<feature type="binding site" evidence="1">
    <location>
        <position position="108"/>
    </location>
    <ligand>
        <name>alpha-D-glucose 1-phosphate</name>
        <dbReference type="ChEBI" id="CHEBI:58601"/>
    </ligand>
</feature>
<feature type="binding site" evidence="1">
    <location>
        <position position="173"/>
    </location>
    <ligand>
        <name>alpha-D-glucose 1-phosphate</name>
        <dbReference type="ChEBI" id="CHEBI:58601"/>
    </ligand>
</feature>
<feature type="binding site" evidence="1">
    <location>
        <begin position="188"/>
        <end position="189"/>
    </location>
    <ligand>
        <name>alpha-D-glucose 1-phosphate</name>
        <dbReference type="ChEBI" id="CHEBI:58601"/>
    </ligand>
</feature>
<feature type="binding site" evidence="1">
    <location>
        <position position="206"/>
    </location>
    <ligand>
        <name>alpha-D-glucose 1-phosphate</name>
        <dbReference type="ChEBI" id="CHEBI:58601"/>
    </ligand>
</feature>
<name>GLGC_PARPJ</name>
<organism>
    <name type="scientific">Paraburkholderia phytofirmans (strain DSM 17436 / LMG 22146 / PsJN)</name>
    <name type="common">Burkholderia phytofirmans</name>
    <dbReference type="NCBI Taxonomy" id="398527"/>
    <lineage>
        <taxon>Bacteria</taxon>
        <taxon>Pseudomonadati</taxon>
        <taxon>Pseudomonadota</taxon>
        <taxon>Betaproteobacteria</taxon>
        <taxon>Burkholderiales</taxon>
        <taxon>Burkholderiaceae</taxon>
        <taxon>Paraburkholderia</taxon>
    </lineage>
</organism>
<evidence type="ECO:0000255" key="1">
    <source>
        <dbReference type="HAMAP-Rule" id="MF_00624"/>
    </source>
</evidence>
<gene>
    <name evidence="1" type="primary">glgC</name>
    <name type="ordered locus">Bphyt_1543</name>
</gene>
<accession>B2T2Z5</accession>
<keyword id="KW-0067">ATP-binding</keyword>
<keyword id="KW-0119">Carbohydrate metabolism</keyword>
<keyword id="KW-0320">Glycogen biosynthesis</keyword>
<keyword id="KW-0321">Glycogen metabolism</keyword>
<keyword id="KW-0547">Nucleotide-binding</keyword>
<keyword id="KW-0548">Nucleotidyltransferase</keyword>
<keyword id="KW-0808">Transferase</keyword>